<proteinExistence type="inferred from homology"/>
<dbReference type="EC" id="2.4.1.16"/>
<dbReference type="EMBL" id="M82955">
    <property type="protein sequence ID" value="AAA33920.1"/>
    <property type="molecule type" value="Genomic_DNA"/>
</dbReference>
<dbReference type="PIR" id="A45190">
    <property type="entry name" value="A45190"/>
</dbReference>
<dbReference type="SMR" id="P30593"/>
<dbReference type="CAZy" id="GT2">
    <property type="family name" value="Glycosyltransferase Family 2"/>
</dbReference>
<dbReference type="GO" id="GO:0030428">
    <property type="term" value="C:cell septum"/>
    <property type="evidence" value="ECO:0007669"/>
    <property type="project" value="TreeGrafter"/>
</dbReference>
<dbReference type="GO" id="GO:0005886">
    <property type="term" value="C:plasma membrane"/>
    <property type="evidence" value="ECO:0007669"/>
    <property type="project" value="UniProtKB-SubCell"/>
</dbReference>
<dbReference type="GO" id="GO:0004100">
    <property type="term" value="F:chitin synthase activity"/>
    <property type="evidence" value="ECO:0007669"/>
    <property type="project" value="UniProtKB-EC"/>
</dbReference>
<dbReference type="GO" id="GO:0071555">
    <property type="term" value="P:cell wall organization"/>
    <property type="evidence" value="ECO:0007669"/>
    <property type="project" value="UniProtKB-KW"/>
</dbReference>
<dbReference type="GO" id="GO:0006031">
    <property type="term" value="P:chitin biosynthetic process"/>
    <property type="evidence" value="ECO:0007669"/>
    <property type="project" value="InterPro"/>
</dbReference>
<dbReference type="InterPro" id="IPR004835">
    <property type="entry name" value="Chitin_synth"/>
</dbReference>
<dbReference type="InterPro" id="IPR004834">
    <property type="entry name" value="Chitin_synth_fun"/>
</dbReference>
<dbReference type="PANTHER" id="PTHR22914">
    <property type="entry name" value="CHITIN SYNTHASE"/>
    <property type="match status" value="1"/>
</dbReference>
<dbReference type="PANTHER" id="PTHR22914:SF11">
    <property type="entry name" value="CHITIN SYNTHASE B"/>
    <property type="match status" value="1"/>
</dbReference>
<dbReference type="Pfam" id="PF01644">
    <property type="entry name" value="Chitin_synth_1"/>
    <property type="match status" value="1"/>
</dbReference>
<protein>
    <recommendedName>
        <fullName>Chitin synthase 2</fullName>
        <ecNumber>2.4.1.16</ecNumber>
    </recommendedName>
    <alternativeName>
        <fullName>Chitin-UDP acetyl-glucosaminyl transferase 2</fullName>
    </alternativeName>
    <alternativeName>
        <fullName>Class-III chitin synthase 2</fullName>
    </alternativeName>
</protein>
<sequence>QVLTARTLHGVMQNIRDIVNLKKSEFWNKGGPAWQKIVVCLVFDGIDPCDQNTLDLLATVGIYQDGVMKKDVDARTRLVHIFEYTTQLSVTPNQQLIDPNDNVTTSLPPVQMIFCLKQKNSKKINSHRWLFDGFGRILNPEVCILLDAGTKPGPKSLMSLWEAFYNDKDLGGACGEIHAMLGRGGVFGRKLLNPLVAA</sequence>
<evidence type="ECO:0000305" key="1"/>
<reference key="1">
    <citation type="journal article" date="1992" name="Proc. Natl. Acad. Sci. U.S.A.">
        <title>Classification of fungal chitin synthases.</title>
        <authorList>
            <person name="Bowen A.R."/>
            <person name="Chen-Wu J.L.-P."/>
            <person name="Momany M."/>
            <person name="Young R."/>
            <person name="Szaniszlo P.J."/>
            <person name="Robbins P.W."/>
        </authorList>
    </citation>
    <scope>NUCLEOTIDE SEQUENCE [GENOMIC DNA]</scope>
</reference>
<comment type="function">
    <text evidence="1">Polymerizes chitin, a structural polymer of the cell wall and septum, by transferring the sugar moiety of UDP-GlcNAc to the non-reducing end of the growing chitin polymer.</text>
</comment>
<comment type="catalytic activity">
    <reaction>
        <text>[(1-&gt;4)-N-acetyl-beta-D-glucosaminyl](n) + UDP-N-acetyl-alpha-D-glucosamine = [(1-&gt;4)-N-acetyl-beta-D-glucosaminyl](n+1) + UDP + H(+)</text>
        <dbReference type="Rhea" id="RHEA:16637"/>
        <dbReference type="Rhea" id="RHEA-COMP:9593"/>
        <dbReference type="Rhea" id="RHEA-COMP:9595"/>
        <dbReference type="ChEBI" id="CHEBI:15378"/>
        <dbReference type="ChEBI" id="CHEBI:17029"/>
        <dbReference type="ChEBI" id="CHEBI:57705"/>
        <dbReference type="ChEBI" id="CHEBI:58223"/>
        <dbReference type="EC" id="2.4.1.16"/>
    </reaction>
</comment>
<comment type="subcellular location">
    <subcellularLocation>
        <location evidence="1">Cell membrane</location>
        <topology evidence="1">Multi-pass membrane protein</topology>
    </subcellularLocation>
</comment>
<comment type="similarity">
    <text evidence="1">Belongs to the chitin synthase family. Class III subfamily.</text>
</comment>
<accession>P30593</accession>
<feature type="chain" id="PRO_0000193710" description="Chitin synthase 2">
    <location>
        <begin position="1" status="less than"/>
        <end position="198" status="greater than"/>
    </location>
</feature>
<feature type="non-terminal residue">
    <location>
        <position position="1"/>
    </location>
</feature>
<feature type="non-terminal residue">
    <location>
        <position position="198"/>
    </location>
</feature>
<name>CHS2_RHIAT</name>
<gene>
    <name type="primary">CHS2</name>
</gene>
<organism>
    <name type="scientific">Rhinocladiella atrovirens</name>
    <dbReference type="NCBI Taxonomy" id="5588"/>
    <lineage>
        <taxon>Eukaryota</taxon>
        <taxon>Fungi</taxon>
        <taxon>Dikarya</taxon>
        <taxon>Ascomycota</taxon>
        <taxon>Pezizomycotina</taxon>
        <taxon>Eurotiomycetes</taxon>
        <taxon>Chaetothyriomycetidae</taxon>
        <taxon>Chaetothyriales</taxon>
        <taxon>Herpotrichiellaceae</taxon>
        <taxon>Rhinocladiella</taxon>
    </lineage>
</organism>
<keyword id="KW-1003">Cell membrane</keyword>
<keyword id="KW-0961">Cell wall biogenesis/degradation</keyword>
<keyword id="KW-0328">Glycosyltransferase</keyword>
<keyword id="KW-0472">Membrane</keyword>
<keyword id="KW-0808">Transferase</keyword>
<keyword id="KW-0812">Transmembrane</keyword>